<dbReference type="EC" id="6.2.1.5" evidence="1"/>
<dbReference type="EMBL" id="CP000050">
    <property type="protein sequence ID" value="AAY48133.1"/>
    <property type="molecule type" value="Genomic_DNA"/>
</dbReference>
<dbReference type="RefSeq" id="WP_011038209.1">
    <property type="nucleotide sequence ID" value="NZ_CP155948.1"/>
</dbReference>
<dbReference type="SMR" id="Q4UXU0"/>
<dbReference type="GeneID" id="58012357"/>
<dbReference type="KEGG" id="xcb:XC_1063"/>
<dbReference type="HOGENOM" id="CLU_037430_0_2_6"/>
<dbReference type="UniPathway" id="UPA00223">
    <property type="reaction ID" value="UER00999"/>
</dbReference>
<dbReference type="Proteomes" id="UP000000420">
    <property type="component" value="Chromosome"/>
</dbReference>
<dbReference type="GO" id="GO:0042709">
    <property type="term" value="C:succinate-CoA ligase complex"/>
    <property type="evidence" value="ECO:0007669"/>
    <property type="project" value="TreeGrafter"/>
</dbReference>
<dbReference type="GO" id="GO:0005524">
    <property type="term" value="F:ATP binding"/>
    <property type="evidence" value="ECO:0007669"/>
    <property type="project" value="UniProtKB-UniRule"/>
</dbReference>
<dbReference type="GO" id="GO:0000287">
    <property type="term" value="F:magnesium ion binding"/>
    <property type="evidence" value="ECO:0007669"/>
    <property type="project" value="UniProtKB-UniRule"/>
</dbReference>
<dbReference type="GO" id="GO:0004775">
    <property type="term" value="F:succinate-CoA ligase (ADP-forming) activity"/>
    <property type="evidence" value="ECO:0007669"/>
    <property type="project" value="UniProtKB-UniRule"/>
</dbReference>
<dbReference type="GO" id="GO:0004776">
    <property type="term" value="F:succinate-CoA ligase (GDP-forming) activity"/>
    <property type="evidence" value="ECO:0007669"/>
    <property type="project" value="RHEA"/>
</dbReference>
<dbReference type="GO" id="GO:0006104">
    <property type="term" value="P:succinyl-CoA metabolic process"/>
    <property type="evidence" value="ECO:0007669"/>
    <property type="project" value="TreeGrafter"/>
</dbReference>
<dbReference type="GO" id="GO:0006099">
    <property type="term" value="P:tricarboxylic acid cycle"/>
    <property type="evidence" value="ECO:0007669"/>
    <property type="project" value="UniProtKB-UniRule"/>
</dbReference>
<dbReference type="FunFam" id="3.30.1490.20:FF:000002">
    <property type="entry name" value="Succinate--CoA ligase [ADP-forming] subunit beta"/>
    <property type="match status" value="1"/>
</dbReference>
<dbReference type="FunFam" id="3.30.470.20:FF:000002">
    <property type="entry name" value="Succinate--CoA ligase [ADP-forming] subunit beta"/>
    <property type="match status" value="1"/>
</dbReference>
<dbReference type="FunFam" id="3.40.50.261:FF:000001">
    <property type="entry name" value="Succinate--CoA ligase [ADP-forming] subunit beta"/>
    <property type="match status" value="1"/>
</dbReference>
<dbReference type="Gene3D" id="3.30.1490.20">
    <property type="entry name" value="ATP-grasp fold, A domain"/>
    <property type="match status" value="1"/>
</dbReference>
<dbReference type="Gene3D" id="3.30.470.20">
    <property type="entry name" value="ATP-grasp fold, B domain"/>
    <property type="match status" value="1"/>
</dbReference>
<dbReference type="Gene3D" id="3.40.50.261">
    <property type="entry name" value="Succinyl-CoA synthetase domains"/>
    <property type="match status" value="1"/>
</dbReference>
<dbReference type="HAMAP" id="MF_00558">
    <property type="entry name" value="Succ_CoA_beta"/>
    <property type="match status" value="1"/>
</dbReference>
<dbReference type="InterPro" id="IPR011761">
    <property type="entry name" value="ATP-grasp"/>
</dbReference>
<dbReference type="InterPro" id="IPR013650">
    <property type="entry name" value="ATP-grasp_succ-CoA_synth-type"/>
</dbReference>
<dbReference type="InterPro" id="IPR013815">
    <property type="entry name" value="ATP_grasp_subdomain_1"/>
</dbReference>
<dbReference type="InterPro" id="IPR017866">
    <property type="entry name" value="Succ-CoA_synthase_bsu_CS"/>
</dbReference>
<dbReference type="InterPro" id="IPR005811">
    <property type="entry name" value="SUCC_ACL_C"/>
</dbReference>
<dbReference type="InterPro" id="IPR005809">
    <property type="entry name" value="Succ_CoA_ligase-like_bsu"/>
</dbReference>
<dbReference type="InterPro" id="IPR016102">
    <property type="entry name" value="Succinyl-CoA_synth-like"/>
</dbReference>
<dbReference type="NCBIfam" id="NF001913">
    <property type="entry name" value="PRK00696.1"/>
    <property type="match status" value="1"/>
</dbReference>
<dbReference type="NCBIfam" id="TIGR01016">
    <property type="entry name" value="sucCoAbeta"/>
    <property type="match status" value="1"/>
</dbReference>
<dbReference type="PANTHER" id="PTHR11815:SF10">
    <property type="entry name" value="SUCCINATE--COA LIGASE [GDP-FORMING] SUBUNIT BETA, MITOCHONDRIAL"/>
    <property type="match status" value="1"/>
</dbReference>
<dbReference type="PANTHER" id="PTHR11815">
    <property type="entry name" value="SUCCINYL-COA SYNTHETASE BETA CHAIN"/>
    <property type="match status" value="1"/>
</dbReference>
<dbReference type="Pfam" id="PF08442">
    <property type="entry name" value="ATP-grasp_2"/>
    <property type="match status" value="1"/>
</dbReference>
<dbReference type="Pfam" id="PF00549">
    <property type="entry name" value="Ligase_CoA"/>
    <property type="match status" value="1"/>
</dbReference>
<dbReference type="PIRSF" id="PIRSF001554">
    <property type="entry name" value="SucCS_beta"/>
    <property type="match status" value="1"/>
</dbReference>
<dbReference type="SUPFAM" id="SSF56059">
    <property type="entry name" value="Glutathione synthetase ATP-binding domain-like"/>
    <property type="match status" value="1"/>
</dbReference>
<dbReference type="SUPFAM" id="SSF52210">
    <property type="entry name" value="Succinyl-CoA synthetase domains"/>
    <property type="match status" value="1"/>
</dbReference>
<dbReference type="PROSITE" id="PS50975">
    <property type="entry name" value="ATP_GRASP"/>
    <property type="match status" value="1"/>
</dbReference>
<dbReference type="PROSITE" id="PS01217">
    <property type="entry name" value="SUCCINYL_COA_LIG_3"/>
    <property type="match status" value="1"/>
</dbReference>
<sequence>MNFHEYQSKQLLAEYGIPVPAGKVASTPDEAVEVANSLGKGPWMVKAQIHAGGRGKAGGVKFCKTTDDVKAAADKMLGTKMSTYQTAGVELPVNLVLVTTAGEIVKELYLSILVDRGTKTITYIASSEGGVEIEQVAAETPELIHSLNVDFVEGVQGYHGRDFGFKLGLNAKQAGQFASIMVNLYRLFNDKDLALVEINPLAILDDGNLYALDGKFDSDDNAAFRQKALVAMRDKTQEDETEVTASELDINYVTMDGNIGCMVNGAGLAMATMDVIKLNGGEPANFLDVGGGANKQRVIEAFKLILSSDKVEGIFVNIFGGIVRCDMIAEGIIAAVKEVGVKVPVVVRLEGTNVEEGKQLLRDSGMAIIPADNINDGAKKVVEAVKNAA</sequence>
<proteinExistence type="inferred from homology"/>
<feature type="chain" id="PRO_1000082262" description="Succinate--CoA ligase [ADP-forming] subunit beta">
    <location>
        <begin position="1"/>
        <end position="389"/>
    </location>
</feature>
<feature type="domain" description="ATP-grasp" evidence="1">
    <location>
        <begin position="9"/>
        <end position="244"/>
    </location>
</feature>
<feature type="binding site" evidence="1">
    <location>
        <position position="46"/>
    </location>
    <ligand>
        <name>ATP</name>
        <dbReference type="ChEBI" id="CHEBI:30616"/>
    </ligand>
</feature>
<feature type="binding site" evidence="1">
    <location>
        <begin position="53"/>
        <end position="55"/>
    </location>
    <ligand>
        <name>ATP</name>
        <dbReference type="ChEBI" id="CHEBI:30616"/>
    </ligand>
</feature>
<feature type="binding site" evidence="1">
    <location>
        <position position="102"/>
    </location>
    <ligand>
        <name>ATP</name>
        <dbReference type="ChEBI" id="CHEBI:30616"/>
    </ligand>
</feature>
<feature type="binding site" evidence="1">
    <location>
        <position position="107"/>
    </location>
    <ligand>
        <name>ATP</name>
        <dbReference type="ChEBI" id="CHEBI:30616"/>
    </ligand>
</feature>
<feature type="binding site" evidence="1">
    <location>
        <position position="199"/>
    </location>
    <ligand>
        <name>Mg(2+)</name>
        <dbReference type="ChEBI" id="CHEBI:18420"/>
    </ligand>
</feature>
<feature type="binding site" evidence="1">
    <location>
        <position position="213"/>
    </location>
    <ligand>
        <name>Mg(2+)</name>
        <dbReference type="ChEBI" id="CHEBI:18420"/>
    </ligand>
</feature>
<feature type="binding site" evidence="1">
    <location>
        <position position="264"/>
    </location>
    <ligand>
        <name>substrate</name>
        <note>ligand shared with subunit alpha</note>
    </ligand>
</feature>
<feature type="binding site" evidence="1">
    <location>
        <begin position="321"/>
        <end position="323"/>
    </location>
    <ligand>
        <name>substrate</name>
        <note>ligand shared with subunit alpha</note>
    </ligand>
</feature>
<comment type="function">
    <text evidence="1">Succinyl-CoA synthetase functions in the citric acid cycle (TCA), coupling the hydrolysis of succinyl-CoA to the synthesis of either ATP or GTP and thus represents the only step of substrate-level phosphorylation in the TCA. The beta subunit provides nucleotide specificity of the enzyme and binds the substrate succinate, while the binding sites for coenzyme A and phosphate are found in the alpha subunit.</text>
</comment>
<comment type="catalytic activity">
    <reaction evidence="1">
        <text>succinate + ATP + CoA = succinyl-CoA + ADP + phosphate</text>
        <dbReference type="Rhea" id="RHEA:17661"/>
        <dbReference type="ChEBI" id="CHEBI:30031"/>
        <dbReference type="ChEBI" id="CHEBI:30616"/>
        <dbReference type="ChEBI" id="CHEBI:43474"/>
        <dbReference type="ChEBI" id="CHEBI:57287"/>
        <dbReference type="ChEBI" id="CHEBI:57292"/>
        <dbReference type="ChEBI" id="CHEBI:456216"/>
        <dbReference type="EC" id="6.2.1.5"/>
    </reaction>
    <physiologicalReaction direction="right-to-left" evidence="1">
        <dbReference type="Rhea" id="RHEA:17663"/>
    </physiologicalReaction>
</comment>
<comment type="catalytic activity">
    <reaction evidence="1">
        <text>GTP + succinate + CoA = succinyl-CoA + GDP + phosphate</text>
        <dbReference type="Rhea" id="RHEA:22120"/>
        <dbReference type="ChEBI" id="CHEBI:30031"/>
        <dbReference type="ChEBI" id="CHEBI:37565"/>
        <dbReference type="ChEBI" id="CHEBI:43474"/>
        <dbReference type="ChEBI" id="CHEBI:57287"/>
        <dbReference type="ChEBI" id="CHEBI:57292"/>
        <dbReference type="ChEBI" id="CHEBI:58189"/>
    </reaction>
    <physiologicalReaction direction="right-to-left" evidence="1">
        <dbReference type="Rhea" id="RHEA:22122"/>
    </physiologicalReaction>
</comment>
<comment type="cofactor">
    <cofactor evidence="1">
        <name>Mg(2+)</name>
        <dbReference type="ChEBI" id="CHEBI:18420"/>
    </cofactor>
    <text evidence="1">Binds 1 Mg(2+) ion per subunit.</text>
</comment>
<comment type="pathway">
    <text evidence="1">Carbohydrate metabolism; tricarboxylic acid cycle; succinate from succinyl-CoA (ligase route): step 1/1.</text>
</comment>
<comment type="subunit">
    <text evidence="1">Heterotetramer of two alpha and two beta subunits.</text>
</comment>
<comment type="similarity">
    <text evidence="1">Belongs to the succinate/malate CoA ligase beta subunit family.</text>
</comment>
<accession>Q4UXU0</accession>
<protein>
    <recommendedName>
        <fullName evidence="1">Succinate--CoA ligase [ADP-forming] subunit beta</fullName>
        <ecNumber evidence="1">6.2.1.5</ecNumber>
    </recommendedName>
    <alternativeName>
        <fullName evidence="1">Succinyl-CoA synthetase subunit beta</fullName>
        <shortName evidence="1">SCS-beta</shortName>
    </alternativeName>
</protein>
<keyword id="KW-0067">ATP-binding</keyword>
<keyword id="KW-0436">Ligase</keyword>
<keyword id="KW-0460">Magnesium</keyword>
<keyword id="KW-0479">Metal-binding</keyword>
<keyword id="KW-0547">Nucleotide-binding</keyword>
<keyword id="KW-0816">Tricarboxylic acid cycle</keyword>
<organism>
    <name type="scientific">Xanthomonas campestris pv. campestris (strain 8004)</name>
    <dbReference type="NCBI Taxonomy" id="314565"/>
    <lineage>
        <taxon>Bacteria</taxon>
        <taxon>Pseudomonadati</taxon>
        <taxon>Pseudomonadota</taxon>
        <taxon>Gammaproteobacteria</taxon>
        <taxon>Lysobacterales</taxon>
        <taxon>Lysobacteraceae</taxon>
        <taxon>Xanthomonas</taxon>
    </lineage>
</organism>
<evidence type="ECO:0000255" key="1">
    <source>
        <dbReference type="HAMAP-Rule" id="MF_00558"/>
    </source>
</evidence>
<name>SUCC_XANC8</name>
<gene>
    <name evidence="1" type="primary">sucC</name>
    <name type="ordered locus">XC_1063</name>
</gene>
<reference key="1">
    <citation type="journal article" date="2005" name="Genome Res.">
        <title>Comparative and functional genomic analyses of the pathogenicity of phytopathogen Xanthomonas campestris pv. campestris.</title>
        <authorList>
            <person name="Qian W."/>
            <person name="Jia Y."/>
            <person name="Ren S.-X."/>
            <person name="He Y.-Q."/>
            <person name="Feng J.-X."/>
            <person name="Lu L.-F."/>
            <person name="Sun Q."/>
            <person name="Ying G."/>
            <person name="Tang D.-J."/>
            <person name="Tang H."/>
            <person name="Wu W."/>
            <person name="Hao P."/>
            <person name="Wang L."/>
            <person name="Jiang B.-L."/>
            <person name="Zeng S."/>
            <person name="Gu W.-Y."/>
            <person name="Lu G."/>
            <person name="Rong L."/>
            <person name="Tian Y."/>
            <person name="Yao Z."/>
            <person name="Fu G."/>
            <person name="Chen B."/>
            <person name="Fang R."/>
            <person name="Qiang B."/>
            <person name="Chen Z."/>
            <person name="Zhao G.-P."/>
            <person name="Tang J.-L."/>
            <person name="He C."/>
        </authorList>
    </citation>
    <scope>NUCLEOTIDE SEQUENCE [LARGE SCALE GENOMIC DNA]</scope>
    <source>
        <strain>8004</strain>
    </source>
</reference>